<proteinExistence type="evidence at protein level"/>
<organism>
    <name type="scientific">Arabidopsis thaliana</name>
    <name type="common">Mouse-ear cress</name>
    <dbReference type="NCBI Taxonomy" id="3702"/>
    <lineage>
        <taxon>Eukaryota</taxon>
        <taxon>Viridiplantae</taxon>
        <taxon>Streptophyta</taxon>
        <taxon>Embryophyta</taxon>
        <taxon>Tracheophyta</taxon>
        <taxon>Spermatophyta</taxon>
        <taxon>Magnoliopsida</taxon>
        <taxon>eudicotyledons</taxon>
        <taxon>Gunneridae</taxon>
        <taxon>Pentapetalae</taxon>
        <taxon>rosids</taxon>
        <taxon>malvids</taxon>
        <taxon>Brassicales</taxon>
        <taxon>Brassicaceae</taxon>
        <taxon>Camelineae</taxon>
        <taxon>Arabidopsis</taxon>
    </lineage>
</organism>
<evidence type="ECO:0000269" key="1">
    <source>
    </source>
</evidence>
<evidence type="ECO:0000269" key="2">
    <source>
    </source>
</evidence>
<evidence type="ECO:0000269" key="3">
    <source>
    </source>
</evidence>
<evidence type="ECO:0000269" key="4">
    <source>
    </source>
</evidence>
<evidence type="ECO:0000269" key="5">
    <source>
    </source>
</evidence>
<evidence type="ECO:0000269" key="6">
    <source>
    </source>
</evidence>
<evidence type="ECO:0000269" key="7">
    <source>
    </source>
</evidence>
<evidence type="ECO:0000269" key="8">
    <source>
    </source>
</evidence>
<evidence type="ECO:0000269" key="9">
    <source>
    </source>
</evidence>
<evidence type="ECO:0000269" key="10">
    <source>
    </source>
</evidence>
<evidence type="ECO:0000269" key="11">
    <source>
    </source>
</evidence>
<evidence type="ECO:0000269" key="12">
    <source>
    </source>
</evidence>
<evidence type="ECO:0007744" key="13">
    <source>
        <dbReference type="PDB" id="3OGK"/>
    </source>
</evidence>
<evidence type="ECO:0007744" key="14">
    <source>
        <dbReference type="PDB" id="3OGL"/>
    </source>
</evidence>
<evidence type="ECO:0007744" key="15">
    <source>
        <dbReference type="PDB" id="3OGM"/>
    </source>
</evidence>
<evidence type="ECO:0007829" key="16">
    <source>
        <dbReference type="PDB" id="3OGK"/>
    </source>
</evidence>
<evidence type="ECO:0007829" key="17">
    <source>
        <dbReference type="PDB" id="3OGL"/>
    </source>
</evidence>
<keyword id="KW-0002">3D-structure</keyword>
<keyword id="KW-1184">Jasmonic acid signaling pathway</keyword>
<keyword id="KW-0433">Leucine-rich repeat</keyword>
<keyword id="KW-0611">Plant defense</keyword>
<keyword id="KW-1185">Reference proteome</keyword>
<keyword id="KW-0677">Repeat</keyword>
<keyword id="KW-0833">Ubl conjugation pathway</keyword>
<sequence length="592" mass="67665">MEDPDIKRCKLSCVATVDDVIEQVMTYITDPKDRDSASLVCRRWFKIDSETREHVTMALCYTATPDRLSRRFPNLRSLKLKGKPRAAMFNLIPENWGGYVTPWVTEISNNLRQLKSVHFRRMIVSDLDLDRLAKARADDLETLKLDKCSGFTTDGLLSIVTHCRKIKTLLMEESSFSEKDGKWLHELAQHNTSLEVLNFYMTEFAKISPKDLETIARNCRSLVSVKVGDFEILELVGFFKAAANLEEFCGGSLNEDIGMPEKYMNLVFPRKLCRLGLSYMGPNEMPILFPFAAQIRKLDLLYALLETEDHCTLIQKCPNLEVLETRNVIGDRGLEVLAQYCKQLKRLRIERGADEQGMEDEEGLVSQRGLIALAQGCQELEYMAVYVSDITNESLESIGTYLKNLCDFRLVLLDREERITDLPLDNGVRSLLIGCKKLRRFAFYLRQGGLTDLGLSYIGQYSPNVRWMLLGYVGESDEGLMEFSRGCPNLQKLEMRGCCFSERAIAAAVTKLPSLRYLWVQGYRASMTGQDLMQMARPYWNIELIPSRRVPEVNQQGEIREMEHPAHILAYYSLAGQRTDCPTTVRVLKEPI</sequence>
<name>COI1_ARATH</name>
<dbReference type="EMBL" id="AF036340">
    <property type="protein sequence ID" value="AAC17498.1"/>
    <property type="molecule type" value="mRNA"/>
</dbReference>
<dbReference type="EMBL" id="EF470606">
    <property type="protein sequence ID" value="ABR45936.1"/>
    <property type="molecule type" value="Genomic_DNA"/>
</dbReference>
<dbReference type="EMBL" id="EF470607">
    <property type="protein sequence ID" value="ABR45937.1"/>
    <property type="molecule type" value="Genomic_DNA"/>
</dbReference>
<dbReference type="EMBL" id="EF470608">
    <property type="protein sequence ID" value="ABR45938.1"/>
    <property type="molecule type" value="Genomic_DNA"/>
</dbReference>
<dbReference type="EMBL" id="EF470609">
    <property type="protein sequence ID" value="ABR45939.1"/>
    <property type="molecule type" value="Genomic_DNA"/>
</dbReference>
<dbReference type="EMBL" id="EF470610">
    <property type="protein sequence ID" value="ABR45940.1"/>
    <property type="molecule type" value="Genomic_DNA"/>
</dbReference>
<dbReference type="EMBL" id="EF470611">
    <property type="protein sequence ID" value="ABR45941.1"/>
    <property type="molecule type" value="Genomic_DNA"/>
</dbReference>
<dbReference type="EMBL" id="EF470612">
    <property type="protein sequence ID" value="ABR45942.1"/>
    <property type="molecule type" value="Genomic_DNA"/>
</dbReference>
<dbReference type="EMBL" id="EF470613">
    <property type="protein sequence ID" value="ABR45943.1"/>
    <property type="molecule type" value="Genomic_DNA"/>
</dbReference>
<dbReference type="EMBL" id="EF470614">
    <property type="protein sequence ID" value="ABR45944.1"/>
    <property type="molecule type" value="Genomic_DNA"/>
</dbReference>
<dbReference type="EMBL" id="EF470615">
    <property type="protein sequence ID" value="ABR45945.1"/>
    <property type="molecule type" value="Genomic_DNA"/>
</dbReference>
<dbReference type="EMBL" id="EF470616">
    <property type="protein sequence ID" value="ABR45946.1"/>
    <property type="molecule type" value="Genomic_DNA"/>
</dbReference>
<dbReference type="EMBL" id="EF470617">
    <property type="protein sequence ID" value="ABR45947.1"/>
    <property type="molecule type" value="Genomic_DNA"/>
</dbReference>
<dbReference type="EMBL" id="EF470619">
    <property type="protein sequence ID" value="ABR45949.1"/>
    <property type="molecule type" value="Genomic_DNA"/>
</dbReference>
<dbReference type="EMBL" id="EF470620">
    <property type="protein sequence ID" value="ABR45950.1"/>
    <property type="molecule type" value="Genomic_DNA"/>
</dbReference>
<dbReference type="EMBL" id="EF470621">
    <property type="protein sequence ID" value="ABR45951.1"/>
    <property type="molecule type" value="Genomic_DNA"/>
</dbReference>
<dbReference type="EMBL" id="EF470622">
    <property type="protein sequence ID" value="ABR45952.1"/>
    <property type="molecule type" value="Genomic_DNA"/>
</dbReference>
<dbReference type="EMBL" id="EF470623">
    <property type="protein sequence ID" value="ABR45953.1"/>
    <property type="molecule type" value="Genomic_DNA"/>
</dbReference>
<dbReference type="EMBL" id="EF470624">
    <property type="protein sequence ID" value="ABR45954.1"/>
    <property type="molecule type" value="Genomic_DNA"/>
</dbReference>
<dbReference type="EMBL" id="AF002109">
    <property type="protein sequence ID" value="AAB95279.1"/>
    <property type="molecule type" value="Genomic_DNA"/>
</dbReference>
<dbReference type="EMBL" id="CP002685">
    <property type="protein sequence ID" value="AEC09753.1"/>
    <property type="molecule type" value="Genomic_DNA"/>
</dbReference>
<dbReference type="EMBL" id="AY045625">
    <property type="protein sequence ID" value="AAK73983.1"/>
    <property type="molecule type" value="mRNA"/>
</dbReference>
<dbReference type="EMBL" id="AY133556">
    <property type="protein sequence ID" value="AAM91386.1"/>
    <property type="molecule type" value="mRNA"/>
</dbReference>
<dbReference type="PIR" id="T52139">
    <property type="entry name" value="T52139"/>
</dbReference>
<dbReference type="RefSeq" id="NP_565919.1">
    <property type="nucleotide sequence ID" value="NM_129552.4"/>
</dbReference>
<dbReference type="PDB" id="3OGK">
    <property type="method" value="X-ray"/>
    <property type="resolution" value="2.80 A"/>
    <property type="chains" value="B/D/F/H/J/L/N/P=1-592"/>
</dbReference>
<dbReference type="PDB" id="3OGL">
    <property type="method" value="X-ray"/>
    <property type="resolution" value="3.18 A"/>
    <property type="chains" value="B/D/F/H/J/L/N/P=1-592"/>
</dbReference>
<dbReference type="PDB" id="3OGM">
    <property type="method" value="X-ray"/>
    <property type="resolution" value="3.34 A"/>
    <property type="chains" value="B/D/F/H/J/L/N/P=1-592"/>
</dbReference>
<dbReference type="PDBsum" id="3OGK"/>
<dbReference type="PDBsum" id="3OGL"/>
<dbReference type="PDBsum" id="3OGM"/>
<dbReference type="SMR" id="O04197"/>
<dbReference type="BioGRID" id="3919">
    <property type="interactions" value="21"/>
</dbReference>
<dbReference type="ComplexPortal" id="CPX-1339">
    <property type="entry name" value="SCF(COI1) ubiquitin ligase complex, variant CUL1-RBX1A-SKP1A"/>
</dbReference>
<dbReference type="ComplexPortal" id="CPX-1429">
    <property type="entry name" value="SCF(COI1) ubiquitin ligase complex, variant CUL1-RBX1A-SKP1B"/>
</dbReference>
<dbReference type="ComplexPortal" id="CPX-1430">
    <property type="entry name" value="SCF(COI1) ubiquitin ligase complex, variant CUL1-RBX1A-ASK3"/>
</dbReference>
<dbReference type="ComplexPortal" id="CPX-1431">
    <property type="entry name" value="SCF(COI1) ubiquitin ligase complex, variant CUL1-RBX1A-ASK4"/>
</dbReference>
<dbReference type="ComplexPortal" id="CPX-1432">
    <property type="entry name" value="SCF(COI1) ubiquitin ligase complex, variant CUL1-RBX1A-ASK5"/>
</dbReference>
<dbReference type="ComplexPortal" id="CPX-1433">
    <property type="entry name" value="SCF(COI1) ubiquitin ligase complex, variant CUL1-RBX1A-ASK6"/>
</dbReference>
<dbReference type="ComplexPortal" id="CPX-1434">
    <property type="entry name" value="SCF(COI1) ubiquitin ligase complex, variant CUL1-RBX1A-ASK7"/>
</dbReference>
<dbReference type="ComplexPortal" id="CPX-1435">
    <property type="entry name" value="SCF(COI1) ubiquitin ligase complex, variant CUL1-RBX1A-ASK8"/>
</dbReference>
<dbReference type="ComplexPortal" id="CPX-1436">
    <property type="entry name" value="SCF(COI1) ubiquitin ligase complex, variant CUL1-RBX1A-ASK9"/>
</dbReference>
<dbReference type="ComplexPortal" id="CPX-1437">
    <property type="entry name" value="SCF(COI1) ubiquitin ligase complex, variant CUL1-RBX1A-ASK10"/>
</dbReference>
<dbReference type="ComplexPortal" id="CPX-1438">
    <property type="entry name" value="SCF(COI1) ubiquitin ligase complex, variant CUL1-RBX1A-ASK11"/>
</dbReference>
<dbReference type="ComplexPortal" id="CPX-1439">
    <property type="entry name" value="SCF(COI1) ubiquitin ligase complex, variant CUL1-RBX1A-ASK12"/>
</dbReference>
<dbReference type="ComplexPortal" id="CPX-1440">
    <property type="entry name" value="SCF(COI1) ubiquitin ligase complex, variant CUL1-RBX1A-ASK13"/>
</dbReference>
<dbReference type="ComplexPortal" id="CPX-1441">
    <property type="entry name" value="SCF(COI1) ubiquitin ligase complex, variant CUL1-RBX1A-ASK14"/>
</dbReference>
<dbReference type="ComplexPortal" id="CPX-1442">
    <property type="entry name" value="SCF(COI1) ubiquitin ligase complex, variant CUL1-RBX1A-ASK15"/>
</dbReference>
<dbReference type="ComplexPortal" id="CPX-1443">
    <property type="entry name" value="SCF(COI1) ubiquitin ligase complex, variant CUL1-RBX1A-ASK16"/>
</dbReference>
<dbReference type="ComplexPortal" id="CPX-1444">
    <property type="entry name" value="SCF(COI1) ubiquitin ligase complex, variant CUL1-RBX1A-ASK17"/>
</dbReference>
<dbReference type="ComplexPortal" id="CPX-1445">
    <property type="entry name" value="SCF(COI1) ubiquitin ligase complex, variant CUL1-RBX1A-ASK18"/>
</dbReference>
<dbReference type="ComplexPortal" id="CPX-1446">
    <property type="entry name" value="SCF(COI1) ubiquitin ligase complex, variant CUL1-RBX1A-ASK19"/>
</dbReference>
<dbReference type="ComplexPortal" id="CPX-1447">
    <property type="entry name" value="SCF(COI1) ubiquitin ligase complex, variant CUL1-RBX1A-ASK20"/>
</dbReference>
<dbReference type="ComplexPortal" id="CPX-1448">
    <property type="entry name" value="SCF(COI1) ubiquitin ligase complex, variant CUL1-RBX1A-ASK21"/>
</dbReference>
<dbReference type="ComplexPortal" id="CPX-1449">
    <property type="entry name" value="SCF(COI1) ubiquitin ligase complex, variant CUL1-RBX1B-SKP1A"/>
</dbReference>
<dbReference type="ComplexPortal" id="CPX-1450">
    <property type="entry name" value="SCF(COI1) ubiquitin ligase complex, variant CUL1-RBX1B-SKP1B"/>
</dbReference>
<dbReference type="ComplexPortal" id="CPX-1451">
    <property type="entry name" value="SCF(COI1) ubiquitin ligase complex, variant CUL1-RBX1B-ASK3"/>
</dbReference>
<dbReference type="ComplexPortal" id="CPX-1452">
    <property type="entry name" value="SCF(COI1) ubiquitin ligase complex, variant CUL1-RBX1B-ASK4"/>
</dbReference>
<dbReference type="ComplexPortal" id="CPX-1453">
    <property type="entry name" value="SCF(COI1) ubiquitin ligase complex, variant CUL1-RBX1B-ASK5"/>
</dbReference>
<dbReference type="ComplexPortal" id="CPX-1454">
    <property type="entry name" value="SCF(COI1) ubiquitin ligase complex, variant CUL1-RBX1B-ASK6"/>
</dbReference>
<dbReference type="ComplexPortal" id="CPX-1455">
    <property type="entry name" value="SCF(COI1) ubiquitin ligase complex, variant CUL1-RBX1B-ASK7"/>
</dbReference>
<dbReference type="ComplexPortal" id="CPX-1456">
    <property type="entry name" value="SCF(COI1) ubiquitin ligase complex, variant CUL1-RBX1B-ASK8"/>
</dbReference>
<dbReference type="ComplexPortal" id="CPX-1457">
    <property type="entry name" value="SCF(COI1) ubiquitin ligase complex, variant CUL1-RBX1B-ASK9"/>
</dbReference>
<dbReference type="ComplexPortal" id="CPX-1458">
    <property type="entry name" value="SCF(COI1) ubiquitin ligase complex, variant CUL1-RBX1B-ASK10"/>
</dbReference>
<dbReference type="ComplexPortal" id="CPX-1459">
    <property type="entry name" value="SCF(COI1) ubiquitin ligase complex, variant CUL1-RBX1B-ASK11"/>
</dbReference>
<dbReference type="ComplexPortal" id="CPX-1460">
    <property type="entry name" value="SCF(COI1) ubiquitin ligase complex, variant CUL1-RBX1B-ASK12"/>
</dbReference>
<dbReference type="ComplexPortal" id="CPX-1461">
    <property type="entry name" value="SCF(COI1) ubiquitin ligase complex, variant CUL1-RBX1B-ASK13"/>
</dbReference>
<dbReference type="ComplexPortal" id="CPX-1462">
    <property type="entry name" value="SCF(COI1) ubiquitin ligase complex, variant CUL1-RBX1B-ASK14"/>
</dbReference>
<dbReference type="ComplexPortal" id="CPX-1463">
    <property type="entry name" value="SCF(COI1) ubiquitin ligase complex, variant CUL1-RBX1B-ASK15"/>
</dbReference>
<dbReference type="ComplexPortal" id="CPX-1464">
    <property type="entry name" value="SCF(COI1) ubiquitin ligase complex, variant CUL1-RBX1B-ASK16"/>
</dbReference>
<dbReference type="ComplexPortal" id="CPX-1465">
    <property type="entry name" value="SCF(COI1) ubiquitin ligase complex, variant CUL1-RBX1B-ASK17"/>
</dbReference>
<dbReference type="ComplexPortal" id="CPX-1466">
    <property type="entry name" value="SCF(COI1) ubiquitin ligase complex, variant CUL1-RBX1B-ASK18"/>
</dbReference>
<dbReference type="ComplexPortal" id="CPX-1467">
    <property type="entry name" value="SCF(COI1) ubiquitin ligase complex, variant CUL1-RBX1B-ASK19"/>
</dbReference>
<dbReference type="ComplexPortal" id="CPX-1468">
    <property type="entry name" value="SCF(COI1) ubiquitin ligase complex, variant CUL1-RBX1B-ASK20"/>
</dbReference>
<dbReference type="ComplexPortal" id="CPX-1469">
    <property type="entry name" value="SCF(COI1) ubiquitin ligase complex, variant CUL1-RBX1B-ASK21"/>
</dbReference>
<dbReference type="ComplexPortal" id="CPX-1471">
    <property type="entry name" value="SCF(COI1) ubiquitin ligase complex, variant CUL2-RBX1A-SKP1A"/>
</dbReference>
<dbReference type="ComplexPortal" id="CPX-1472">
    <property type="entry name" value="SCF(COI1) ubiquitin ligase complex, variant CUL2-RBX1A-SKP1B"/>
</dbReference>
<dbReference type="ComplexPortal" id="CPX-1473">
    <property type="entry name" value="SCF(COI1) ubiquitin ligase complex, variant CUL2-RBX1A-ASK3"/>
</dbReference>
<dbReference type="ComplexPortal" id="CPX-1474">
    <property type="entry name" value="SCF(COI1) ubiquitin ligase complex, variant CUL2-RBX1A-ASK4"/>
</dbReference>
<dbReference type="ComplexPortal" id="CPX-1475">
    <property type="entry name" value="SCF(COI1) ubiquitin ligase complex, variant CUL2-RBX1A-ASK5"/>
</dbReference>
<dbReference type="ComplexPortal" id="CPX-1476">
    <property type="entry name" value="SCF(COI1) ubiquitin ligase complex, variant CUL2-RBX1A-ASK6"/>
</dbReference>
<dbReference type="ComplexPortal" id="CPX-1477">
    <property type="entry name" value="SCF(COI1) ubiquitin ligase complex, variant CUL2-RBX1A-ASK7"/>
</dbReference>
<dbReference type="ComplexPortal" id="CPX-1478">
    <property type="entry name" value="SCF(COI1) ubiquitin ligase complex, variant CUL2-RBX1A-ASK8"/>
</dbReference>
<dbReference type="ComplexPortal" id="CPX-1479">
    <property type="entry name" value="SCF(COI1) ubiquitin ligase complex, variant CUL2-RBX1A-ASK9"/>
</dbReference>
<dbReference type="ComplexPortal" id="CPX-1480">
    <property type="entry name" value="SCF(COI1) ubiquitin ligase complex, variant CUL2-RBX1A-ASK10"/>
</dbReference>
<dbReference type="ComplexPortal" id="CPX-1481">
    <property type="entry name" value="SCF(COI1) ubiquitin ligase complex, variant CUL2-RBX1A-ASK11"/>
</dbReference>
<dbReference type="ComplexPortal" id="CPX-1482">
    <property type="entry name" value="SCF(COI1) ubiquitin ligase complex, variant CUL2-RBX1A-ASK12"/>
</dbReference>
<dbReference type="ComplexPortal" id="CPX-1483">
    <property type="entry name" value="SCF(COI1) ubiquitin ligase complex, variant CUL2-RBX1A-ASK13"/>
</dbReference>
<dbReference type="ComplexPortal" id="CPX-1484">
    <property type="entry name" value="SCF(COI1) ubiquitin ligase complex, variant CUL2-RBX1A-ASK14"/>
</dbReference>
<dbReference type="ComplexPortal" id="CPX-1485">
    <property type="entry name" value="SCF(COI1) ubiquitin ligase complex, variant CUL2-RBX1A-ASK15"/>
</dbReference>
<dbReference type="ComplexPortal" id="CPX-1486">
    <property type="entry name" value="SCF(COI1) ubiquitin ligase complex, variant CUL2-RBX1A-ASK16"/>
</dbReference>
<dbReference type="ComplexPortal" id="CPX-1487">
    <property type="entry name" value="SCF(COI1) ubiquitin ligase complex, variant CUL2-RBX1A-ASK17"/>
</dbReference>
<dbReference type="ComplexPortal" id="CPX-1488">
    <property type="entry name" value="SCF(COI1) ubiquitin ligase complex, variant CUL2-RBX1A-ASK18"/>
</dbReference>
<dbReference type="ComplexPortal" id="CPX-1489">
    <property type="entry name" value="SCF(COI1) ubiquitin ligase complex, variant CUL2-RBX1A-ASK19"/>
</dbReference>
<dbReference type="ComplexPortal" id="CPX-1490">
    <property type="entry name" value="SCF(COI1) ubiquitin ligase complex, variant CUL2-RBX1A-ASK20"/>
</dbReference>
<dbReference type="ComplexPortal" id="CPX-1491">
    <property type="entry name" value="SCF(COI1) ubiquitin ligase complex, variant CUL2-RBX1A-ASK21"/>
</dbReference>
<dbReference type="ComplexPortal" id="CPX-1492">
    <property type="entry name" value="SCF(COI1) ubiquitin ligase complex, variant CUL2-RBX1B-SKP1A"/>
</dbReference>
<dbReference type="ComplexPortal" id="CPX-1493">
    <property type="entry name" value="SCF(COI1) ubiquitin ligase complex, variant CUL2-RBX1B-SKP1B"/>
</dbReference>
<dbReference type="ComplexPortal" id="CPX-1494">
    <property type="entry name" value="SCF(COI1) ubiquitin ligase complex, variant CUL2-RBX1B-ASK3"/>
</dbReference>
<dbReference type="ComplexPortal" id="CPX-1495">
    <property type="entry name" value="SCF(COI1) ubiquitin ligase complex, variant CUL2-RBX1B-ASK4"/>
</dbReference>
<dbReference type="ComplexPortal" id="CPX-1496">
    <property type="entry name" value="SCF(COI1) ubiquitin ligase complex, variant CUL2-RBX1B-ASK5"/>
</dbReference>
<dbReference type="ComplexPortal" id="CPX-1497">
    <property type="entry name" value="SCF(COI1) ubiquitin ligase complex, variant CUL2-RBX1B-ASK6"/>
</dbReference>
<dbReference type="ComplexPortal" id="CPX-1498">
    <property type="entry name" value="SCF(COI1) ubiquitin ligase complex, variant CUL2-RBX1B-ASK7"/>
</dbReference>
<dbReference type="ComplexPortal" id="CPX-1499">
    <property type="entry name" value="SCF(COI1) ubiquitin ligase complex, variant CUL2-RBX1B-ASK8"/>
</dbReference>
<dbReference type="ComplexPortal" id="CPX-1502">
    <property type="entry name" value="SCF(COI1) ubiquitin ligase complex, variant CUL2-RBX1B-ASK9"/>
</dbReference>
<dbReference type="ComplexPortal" id="CPX-1503">
    <property type="entry name" value="SCF(COI1) ubiquitin ligase complex, variant CUL2-RBX1B-ASK10"/>
</dbReference>
<dbReference type="ComplexPortal" id="CPX-1504">
    <property type="entry name" value="SCF(COI1) ubiquitin ligase complex, variant CUL2-RBX1B-ASK11"/>
</dbReference>
<dbReference type="ComplexPortal" id="CPX-1505">
    <property type="entry name" value="SCF(COI1) ubiquitin ligase complex, variant CUL2-RBX1B-ASK12"/>
</dbReference>
<dbReference type="ComplexPortal" id="CPX-1506">
    <property type="entry name" value="SCF(COI1) ubiquitin ligase complex, variant CUL2-RBX1B-ASK13"/>
</dbReference>
<dbReference type="ComplexPortal" id="CPX-1507">
    <property type="entry name" value="SCF(COI1) ubiquitin ligase complex, variant CUL2-RBX1B-ASK14"/>
</dbReference>
<dbReference type="ComplexPortal" id="CPX-1508">
    <property type="entry name" value="SCF(COI1) ubiquitin ligase complex, variant CUL2-RBX1B-ASK15"/>
</dbReference>
<dbReference type="ComplexPortal" id="CPX-1509">
    <property type="entry name" value="SCF(COI1) ubiquitin ligase complex, variant CUL2-RBX1B-ASK16"/>
</dbReference>
<dbReference type="ComplexPortal" id="CPX-1510">
    <property type="entry name" value="SCF(COI1) ubiquitin ligase complex, variant CUL2-RBX1B-ASK17"/>
</dbReference>
<dbReference type="ComplexPortal" id="CPX-1511">
    <property type="entry name" value="SCF(COI1) ubiquitin ligase complex, variant CUL2-RBX1B-ASK18"/>
</dbReference>
<dbReference type="ComplexPortal" id="CPX-1512">
    <property type="entry name" value="SCF(COI1) ubiquitin ligase complex, variant CUL2-RBX1B-ASK19"/>
</dbReference>
<dbReference type="ComplexPortal" id="CPX-1513">
    <property type="entry name" value="SCF(COI1) ubiquitin ligase complex, variant CUL2-RBX1B-ASK20"/>
</dbReference>
<dbReference type="ComplexPortal" id="CPX-1514">
    <property type="entry name" value="SCF(COI1) ubiquitin ligase complex, variant CUL2-RBX1B-ASK21"/>
</dbReference>
<dbReference type="DIP" id="DIP-31324N"/>
<dbReference type="FunCoup" id="O04197">
    <property type="interactions" value="1287"/>
</dbReference>
<dbReference type="IntAct" id="O04197">
    <property type="interactions" value="14"/>
</dbReference>
<dbReference type="STRING" id="3702.O04197"/>
<dbReference type="GlyGen" id="O04197">
    <property type="glycosylation" value="1 site"/>
</dbReference>
<dbReference type="PaxDb" id="3702-AT2G39940.1"/>
<dbReference type="ProteomicsDB" id="241009"/>
<dbReference type="EnsemblPlants" id="AT2G39940.1">
    <property type="protein sequence ID" value="AT2G39940.1"/>
    <property type="gene ID" value="AT2G39940"/>
</dbReference>
<dbReference type="GeneID" id="818581"/>
<dbReference type="Gramene" id="AT2G39940.1">
    <property type="protein sequence ID" value="AT2G39940.1"/>
    <property type="gene ID" value="AT2G39940"/>
</dbReference>
<dbReference type="KEGG" id="ath:AT2G39940"/>
<dbReference type="Araport" id="AT2G39940"/>
<dbReference type="TAIR" id="AT2G39940">
    <property type="gene designation" value="COI1"/>
</dbReference>
<dbReference type="eggNOG" id="KOG1947">
    <property type="taxonomic scope" value="Eukaryota"/>
</dbReference>
<dbReference type="HOGENOM" id="CLU_022456_2_0_1"/>
<dbReference type="InParanoid" id="O04197"/>
<dbReference type="OMA" id="CYTATPD"/>
<dbReference type="OrthoDB" id="550575at2759"/>
<dbReference type="PhylomeDB" id="O04197"/>
<dbReference type="UniPathway" id="UPA00143"/>
<dbReference type="EvolutionaryTrace" id="O04197"/>
<dbReference type="PRO" id="PR:O04197"/>
<dbReference type="Proteomes" id="UP000006548">
    <property type="component" value="Chromosome 2"/>
</dbReference>
<dbReference type="ExpressionAtlas" id="O04197">
    <property type="expression patterns" value="baseline and differential"/>
</dbReference>
<dbReference type="GO" id="GO:0019005">
    <property type="term" value="C:SCF ubiquitin ligase complex"/>
    <property type="evidence" value="ECO:0000314"/>
    <property type="project" value="ComplexPortal"/>
</dbReference>
<dbReference type="GO" id="GO:0009901">
    <property type="term" value="P:anther dehiscence"/>
    <property type="evidence" value="ECO:0000315"/>
    <property type="project" value="CACAO"/>
</dbReference>
<dbReference type="GO" id="GO:0006952">
    <property type="term" value="P:defense response"/>
    <property type="evidence" value="ECO:0000304"/>
    <property type="project" value="TAIR"/>
</dbReference>
<dbReference type="GO" id="GO:0042742">
    <property type="term" value="P:defense response to bacterium"/>
    <property type="evidence" value="ECO:0000315"/>
    <property type="project" value="TAIR"/>
</dbReference>
<dbReference type="GO" id="GO:0050832">
    <property type="term" value="P:defense response to fungus"/>
    <property type="evidence" value="ECO:0000315"/>
    <property type="project" value="TAIR"/>
</dbReference>
<dbReference type="GO" id="GO:0106167">
    <property type="term" value="P:extracellular ATP signaling"/>
    <property type="evidence" value="ECO:0000315"/>
    <property type="project" value="TAIR"/>
</dbReference>
<dbReference type="GO" id="GO:0009861">
    <property type="term" value="P:jasmonic acid and ethylene-dependent systemic resistance"/>
    <property type="evidence" value="ECO:0000304"/>
    <property type="project" value="TAIR"/>
</dbReference>
<dbReference type="GO" id="GO:0009867">
    <property type="term" value="P:jasmonic acid mediated signaling pathway"/>
    <property type="evidence" value="ECO:0000315"/>
    <property type="project" value="ComplexPortal"/>
</dbReference>
<dbReference type="GO" id="GO:0031348">
    <property type="term" value="P:negative regulation of defense response"/>
    <property type="evidence" value="ECO:0000315"/>
    <property type="project" value="TAIR"/>
</dbReference>
<dbReference type="GO" id="GO:0016567">
    <property type="term" value="P:protein ubiquitination"/>
    <property type="evidence" value="ECO:0007669"/>
    <property type="project" value="UniProtKB-UniPathway"/>
</dbReference>
<dbReference type="GO" id="GO:0009909">
    <property type="term" value="P:regulation of flower development"/>
    <property type="evidence" value="ECO:0000315"/>
    <property type="project" value="TAIR"/>
</dbReference>
<dbReference type="GO" id="GO:0010218">
    <property type="term" value="P:response to far red light"/>
    <property type="evidence" value="ECO:0000315"/>
    <property type="project" value="TAIR"/>
</dbReference>
<dbReference type="GO" id="GO:0009625">
    <property type="term" value="P:response to insect"/>
    <property type="evidence" value="ECO:0000315"/>
    <property type="project" value="TAIR"/>
</dbReference>
<dbReference type="GO" id="GO:0009753">
    <property type="term" value="P:response to jasmonic acid"/>
    <property type="evidence" value="ECO:0000315"/>
    <property type="project" value="TAIR"/>
</dbReference>
<dbReference type="GO" id="GO:0009611">
    <property type="term" value="P:response to wounding"/>
    <property type="evidence" value="ECO:0000315"/>
    <property type="project" value="TAIR"/>
</dbReference>
<dbReference type="GO" id="GO:0048364">
    <property type="term" value="P:root development"/>
    <property type="evidence" value="ECO:0000315"/>
    <property type="project" value="TAIR"/>
</dbReference>
<dbReference type="GO" id="GO:0031146">
    <property type="term" value="P:SCF-dependent proteasomal ubiquitin-dependent protein catabolic process"/>
    <property type="evidence" value="ECO:0000315"/>
    <property type="project" value="TAIR"/>
</dbReference>
<dbReference type="GO" id="GO:0009641">
    <property type="term" value="P:shade avoidance"/>
    <property type="evidence" value="ECO:0000315"/>
    <property type="project" value="TAIR"/>
</dbReference>
<dbReference type="GO" id="GO:0048443">
    <property type="term" value="P:stamen development"/>
    <property type="evidence" value="ECO:0000315"/>
    <property type="project" value="TAIR"/>
</dbReference>
<dbReference type="GO" id="GO:0010118">
    <property type="term" value="P:stomatal movement"/>
    <property type="evidence" value="ECO:0000315"/>
    <property type="project" value="TAIR"/>
</dbReference>
<dbReference type="CDD" id="cd22159">
    <property type="entry name" value="F-box_AtTIR1-like"/>
    <property type="match status" value="1"/>
</dbReference>
<dbReference type="FunFam" id="1.20.1280.50:FF:000054">
    <property type="entry name" value="Coronatine-insensitive protein 1"/>
    <property type="match status" value="1"/>
</dbReference>
<dbReference type="FunFam" id="3.80.10.10:FF:000124">
    <property type="entry name" value="Coronatine-insensitive protein 1"/>
    <property type="match status" value="1"/>
</dbReference>
<dbReference type="Gene3D" id="1.20.1280.50">
    <property type="match status" value="1"/>
</dbReference>
<dbReference type="Gene3D" id="3.80.10.10">
    <property type="entry name" value="Ribonuclease Inhibitor"/>
    <property type="match status" value="1"/>
</dbReference>
<dbReference type="InterPro" id="IPR041567">
    <property type="entry name" value="COI1_F-box"/>
</dbReference>
<dbReference type="InterPro" id="IPR032675">
    <property type="entry name" value="LRR_dom_sf"/>
</dbReference>
<dbReference type="InterPro" id="IPR041101">
    <property type="entry name" value="Transp_inhibit"/>
</dbReference>
<dbReference type="PANTHER" id="PTHR16134:SF119">
    <property type="entry name" value="AT02038P-RELATED"/>
    <property type="match status" value="1"/>
</dbReference>
<dbReference type="PANTHER" id="PTHR16134">
    <property type="entry name" value="F-BOX/TPR REPEAT PROTEIN POF3"/>
    <property type="match status" value="1"/>
</dbReference>
<dbReference type="Pfam" id="PF18511">
    <property type="entry name" value="F-box_5"/>
    <property type="match status" value="1"/>
</dbReference>
<dbReference type="Pfam" id="PF18791">
    <property type="entry name" value="Transp_inhibit"/>
    <property type="match status" value="1"/>
</dbReference>
<dbReference type="SUPFAM" id="SSF52047">
    <property type="entry name" value="RNI-like"/>
    <property type="match status" value="1"/>
</dbReference>
<gene>
    <name type="primary">COI1</name>
    <name type="synonym">FBL2</name>
    <name type="ordered locus">At2g39940</name>
    <name type="ORF">T28M21.10</name>
</gene>
<accession>O04197</accession>
<accession>B2BD84</accession>
<feature type="chain" id="PRO_0000119960" description="Coronatine-insensitive protein 1">
    <location>
        <begin position="1"/>
        <end position="592"/>
    </location>
</feature>
<feature type="domain" description="F-box">
    <location>
        <begin position="16"/>
        <end position="57"/>
    </location>
</feature>
<feature type="repeat" description="LRR 1">
    <location>
        <begin position="58"/>
        <end position="82"/>
    </location>
</feature>
<feature type="repeat" description="LRR 2">
    <location>
        <begin position="83"/>
        <end position="102"/>
    </location>
</feature>
<feature type="repeat" description="LRR 3">
    <location>
        <begin position="103"/>
        <end position="120"/>
    </location>
</feature>
<feature type="repeat" description="LRR 4">
    <location>
        <begin position="121"/>
        <end position="154"/>
    </location>
</feature>
<feature type="repeat" description="LRR 5">
    <location>
        <begin position="155"/>
        <end position="182"/>
    </location>
</feature>
<feature type="repeat" description="LRR 6">
    <location>
        <begin position="183"/>
        <end position="210"/>
    </location>
</feature>
<feature type="repeat" description="LRR 7">
    <location>
        <begin position="211"/>
        <end position="236"/>
    </location>
</feature>
<feature type="repeat" description="LRR 8">
    <location>
        <begin position="237"/>
        <end position="264"/>
    </location>
</feature>
<feature type="repeat" description="LRR 8">
    <location>
        <begin position="265"/>
        <end position="283"/>
    </location>
</feature>
<feature type="repeat" description="LRR 10">
    <location>
        <begin position="284"/>
        <end position="308"/>
    </location>
</feature>
<feature type="repeat" description="LRR 11">
    <location>
        <begin position="309"/>
        <end position="332"/>
    </location>
</feature>
<feature type="repeat" description="LRR 12">
    <location>
        <begin position="333"/>
        <end position="368"/>
    </location>
</feature>
<feature type="repeat" description="LRR 13">
    <location>
        <begin position="369"/>
        <end position="393"/>
    </location>
</feature>
<feature type="repeat" description="LRR 14">
    <location>
        <begin position="394"/>
        <end position="426"/>
    </location>
</feature>
<feature type="repeat" description="LRR 15">
    <location>
        <begin position="427"/>
        <end position="456"/>
    </location>
</feature>
<feature type="repeat" description="LRR 16">
    <location>
        <begin position="457"/>
        <end position="478"/>
    </location>
</feature>
<feature type="repeat" description="LRR 17">
    <location>
        <begin position="479"/>
        <end position="500"/>
    </location>
</feature>
<feature type="repeat" description="LRR 18">
    <location>
        <begin position="501"/>
        <end position="524"/>
    </location>
</feature>
<feature type="binding site" evidence="11 13 14 15">
    <location>
        <position position="85"/>
    </location>
    <ligand>
        <name>jasmonate</name>
        <dbReference type="ChEBI" id="CHEBI:58431"/>
    </ligand>
</feature>
<feature type="binding site" evidence="11 13 14 15">
    <location>
        <position position="348"/>
    </location>
    <ligand>
        <name>jasmonate</name>
        <dbReference type="ChEBI" id="CHEBI:58431"/>
    </ligand>
</feature>
<feature type="binding site" evidence="11 13 15">
    <location>
        <position position="386"/>
    </location>
    <ligand>
        <name>jasmonate</name>
        <dbReference type="ChEBI" id="CHEBI:58431"/>
    </ligand>
</feature>
<feature type="binding site" evidence="11 13 14 15">
    <location>
        <position position="409"/>
    </location>
    <ligand>
        <name>jasmonate</name>
        <dbReference type="ChEBI" id="CHEBI:58431"/>
    </ligand>
</feature>
<feature type="binding site" evidence="11 14 15">
    <location>
        <position position="496"/>
    </location>
    <ligand>
        <name>jasmonate</name>
        <dbReference type="ChEBI" id="CHEBI:58431"/>
    </ligand>
</feature>
<feature type="mutagenesis site" description="No effects on interactions." evidence="6">
    <original>L</original>
    <variation>A</variation>
    <location>
        <position position="11"/>
    </location>
</feature>
<feature type="mutagenesis site" description="Abrogates SFC(COI1) complexes formation, loss of response to jasmonate." evidence="3">
    <original>E</original>
    <variation>A</variation>
    <location>
        <position position="22"/>
    </location>
</feature>
<feature type="mutagenesis site" description="Abrogates SFC(COI1) complexes formation and of interactions with RBCS-1B and RPD3B, loss of response to jasmonate." evidence="6">
    <original>W</original>
    <variation>A</variation>
    <location>
        <position position="44"/>
    </location>
</feature>
<feature type="mutagenesis site" description="Loss of interaction with TIFY10A." evidence="11">
    <original>R</original>
    <variation>A</variation>
    <location>
        <position position="85"/>
    </location>
</feature>
<feature type="mutagenesis site" description="Loss of interaction with TIFY10A." evidence="11">
    <original>M</original>
    <variation>A</variation>
    <location>
        <position position="88"/>
    </location>
</feature>
<feature type="mutagenesis site" description="Loss of interaction with TIFY10A." evidence="11">
    <original>F</original>
    <variation>A</variation>
    <location>
        <position position="89"/>
    </location>
</feature>
<feature type="mutagenesis site" description="Loss of interaction with TIFY10A." evidence="11">
    <original>R</original>
    <variation>A</variation>
    <location>
        <position position="121"/>
    </location>
</feature>
<feature type="mutagenesis site" description="In coi1-16; abrogates interactions with RBCS-1B and RPD3B (coi1-16)." evidence="4 6">
    <original>L</original>
    <variation>F</variation>
    <location>
        <position position="245"/>
    </location>
</feature>
<feature type="mutagenesis site" description="Loss of interaction with TIFY10A." evidence="11">
    <original>L</original>
    <variation>A</variation>
    <location>
        <position position="301"/>
    </location>
</feature>
<feature type="mutagenesis site" description="Loss of interaction with TIFY10A." evidence="11">
    <original>Y</original>
    <variation>A</variation>
    <location>
        <position position="302"/>
    </location>
</feature>
<feature type="mutagenesis site" description="Loss of interaction with TIFY10A." evidence="11">
    <original>R</original>
    <variation>A</variation>
    <location>
        <position position="326"/>
    </location>
</feature>
<feature type="mutagenesis site" description="Loss of interaction with TIFY10A." evidence="11">
    <original>R</original>
    <variation>A</variation>
    <location>
        <position position="348"/>
    </location>
</feature>
<feature type="mutagenesis site" description="Loss of interaction with TIFY10A." evidence="11">
    <original>R</original>
    <variation>A</variation>
    <location>
        <position position="351"/>
    </location>
</feature>
<feature type="mutagenesis site" description="Loss of interaction with TIFY10A." evidence="11">
    <original>Y</original>
    <variation>A</variation>
    <location>
        <position position="386"/>
    </location>
</feature>
<feature type="mutagenesis site" description="Loss of interaction with TIFY10A." evidence="11">
    <original>R</original>
    <variation>A</variation>
    <location>
        <position position="409"/>
    </location>
</feature>
<feature type="mutagenesis site" description="Loss of interaction with TIFY10A." evidence="11">
    <original>Y</original>
    <variation>A</variation>
    <location>
        <position position="444"/>
    </location>
</feature>
<feature type="mutagenesis site" description="Loss of interaction with TIFY10A." evidence="11">
    <original>L</original>
    <variation>A</variation>
    <location>
        <position position="469"/>
    </location>
</feature>
<feature type="mutagenesis site" description="Loss of interaction with TIFY10A." evidence="11">
    <original>R</original>
    <variation>A</variation>
    <location>
        <position position="496"/>
    </location>
</feature>
<feature type="helix" evidence="16">
    <location>
        <begin position="17"/>
        <end position="19"/>
    </location>
</feature>
<feature type="helix" evidence="16">
    <location>
        <begin position="21"/>
        <end position="25"/>
    </location>
</feature>
<feature type="helix" evidence="16">
    <location>
        <begin position="31"/>
        <end position="37"/>
    </location>
</feature>
<feature type="helix" evidence="16">
    <location>
        <begin position="42"/>
        <end position="51"/>
    </location>
</feature>
<feature type="strand" evidence="16">
    <location>
        <begin position="54"/>
        <end position="58"/>
    </location>
</feature>
<feature type="helix" evidence="16">
    <location>
        <begin position="60"/>
        <end position="62"/>
    </location>
</feature>
<feature type="helix" evidence="16">
    <location>
        <begin position="65"/>
        <end position="71"/>
    </location>
</feature>
<feature type="strand" evidence="16">
    <location>
        <begin position="76"/>
        <end position="81"/>
    </location>
</feature>
<feature type="helix" evidence="16">
    <location>
        <begin position="85"/>
        <end position="89"/>
    </location>
</feature>
<feature type="helix" evidence="17">
    <location>
        <begin position="94"/>
        <end position="96"/>
    </location>
</feature>
<feature type="helix" evidence="16">
    <location>
        <begin position="101"/>
        <end position="110"/>
    </location>
</feature>
<feature type="strand" evidence="16">
    <location>
        <begin position="116"/>
        <end position="121"/>
    </location>
</feature>
<feature type="helix" evidence="16">
    <location>
        <begin position="126"/>
        <end position="136"/>
    </location>
</feature>
<feature type="helix" evidence="16">
    <location>
        <begin position="137"/>
        <end position="139"/>
    </location>
</feature>
<feature type="strand" evidence="16">
    <location>
        <begin position="142"/>
        <end position="147"/>
    </location>
</feature>
<feature type="strand" evidence="16">
    <location>
        <begin position="149"/>
        <end position="152"/>
    </location>
</feature>
<feature type="helix" evidence="16">
    <location>
        <begin position="153"/>
        <end position="162"/>
    </location>
</feature>
<feature type="strand" evidence="16">
    <location>
        <begin position="167"/>
        <end position="170"/>
    </location>
</feature>
<feature type="strand" evidence="16">
    <location>
        <begin position="175"/>
        <end position="177"/>
    </location>
</feature>
<feature type="helix" evidence="16">
    <location>
        <begin position="182"/>
        <end position="190"/>
    </location>
</feature>
<feature type="strand" evidence="16">
    <location>
        <begin position="196"/>
        <end position="198"/>
    </location>
</feature>
<feature type="helix" evidence="16">
    <location>
        <begin position="209"/>
        <end position="218"/>
    </location>
</feature>
<feature type="strand" evidence="16">
    <location>
        <begin position="224"/>
        <end position="226"/>
    </location>
</feature>
<feature type="helix" evidence="16">
    <location>
        <begin position="232"/>
        <end position="235"/>
    </location>
</feature>
<feature type="helix" evidence="16">
    <location>
        <begin position="236"/>
        <end position="241"/>
    </location>
</feature>
<feature type="strand" evidence="16">
    <location>
        <begin position="247"/>
        <end position="250"/>
    </location>
</feature>
<feature type="strand" evidence="16">
    <location>
        <begin position="262"/>
        <end position="264"/>
    </location>
</feature>
<feature type="strand" evidence="16">
    <location>
        <begin position="274"/>
        <end position="277"/>
    </location>
</feature>
<feature type="turn" evidence="16">
    <location>
        <begin position="282"/>
        <end position="284"/>
    </location>
</feature>
<feature type="helix" evidence="16">
    <location>
        <begin position="285"/>
        <end position="294"/>
    </location>
</feature>
<feature type="strand" evidence="16">
    <location>
        <begin position="297"/>
        <end position="300"/>
    </location>
</feature>
<feature type="helix" evidence="16">
    <location>
        <begin position="307"/>
        <end position="314"/>
    </location>
</feature>
<feature type="strand" evidence="16">
    <location>
        <begin position="322"/>
        <end position="326"/>
    </location>
</feature>
<feature type="helix" evidence="16">
    <location>
        <begin position="327"/>
        <end position="329"/>
    </location>
</feature>
<feature type="helix" evidence="16">
    <location>
        <begin position="330"/>
        <end position="340"/>
    </location>
</feature>
<feature type="strand" evidence="16">
    <location>
        <begin position="346"/>
        <end position="350"/>
    </location>
</feature>
<feature type="strand" evidence="17">
    <location>
        <begin position="355"/>
        <end position="362"/>
    </location>
</feature>
<feature type="helix" evidence="16">
    <location>
        <begin position="367"/>
        <end position="376"/>
    </location>
</feature>
<feature type="strand" evidence="16">
    <location>
        <begin position="381"/>
        <end position="388"/>
    </location>
</feature>
<feature type="helix" evidence="16">
    <location>
        <begin position="392"/>
        <end position="401"/>
    </location>
</feature>
<feature type="strand" evidence="16">
    <location>
        <begin position="407"/>
        <end position="412"/>
    </location>
</feature>
<feature type="helix" evidence="16">
    <location>
        <begin position="425"/>
        <end position="434"/>
    </location>
</feature>
<feature type="strand" evidence="16">
    <location>
        <begin position="440"/>
        <end position="444"/>
    </location>
</feature>
<feature type="helix" evidence="16">
    <location>
        <begin position="447"/>
        <end position="449"/>
    </location>
</feature>
<feature type="helix" evidence="16">
    <location>
        <begin position="452"/>
        <end position="460"/>
    </location>
</feature>
<feature type="strand" evidence="16">
    <location>
        <begin position="467"/>
        <end position="470"/>
    </location>
</feature>
<feature type="helix" evidence="16">
    <location>
        <begin position="477"/>
        <end position="484"/>
    </location>
</feature>
<feature type="strand" evidence="16">
    <location>
        <begin position="492"/>
        <end position="497"/>
    </location>
</feature>
<feature type="helix" evidence="16">
    <location>
        <begin position="502"/>
        <end position="511"/>
    </location>
</feature>
<feature type="strand" evidence="16">
    <location>
        <begin position="517"/>
        <end position="522"/>
    </location>
</feature>
<feature type="helix" evidence="16">
    <location>
        <begin position="532"/>
        <end position="535"/>
    </location>
</feature>
<feature type="strand" evidence="16">
    <location>
        <begin position="540"/>
        <end position="545"/>
    </location>
</feature>
<feature type="strand" evidence="16">
    <location>
        <begin position="567"/>
        <end position="572"/>
    </location>
</feature>
<protein>
    <recommendedName>
        <fullName>Coronatine-insensitive protein 1</fullName>
    </recommendedName>
    <alternativeName>
        <fullName>COI-1</fullName>
    </alternativeName>
    <alternativeName>
        <fullName>F-box/LRR-repeat protein 2</fullName>
        <shortName>AtCOI1</shortName>
        <shortName>AtFBL2</shortName>
    </alternativeName>
</protein>
<comment type="function">
    <text evidence="1 3 4 5 6 7 8 10 12">Required for jasmonate-regulated plant fertility and defense processes, and for coronatine and/or other elicitors perceptions/responses. Seems to not be required for meiosis. Required for the regulation of some genes induced by wounding, but not for all. Component of SCF(COI1) E3 ubiquitin ligase complexes, which may mediate the ubiquitination and subsequent proteasomal degradation of target proteins (probably including the ribulose bisphosphate carboxylase small chain 1B RBCS-1B and the histone deacetylase HDA6). These SCF complexes play crucial roles in regulating response to jasmonate, and their interactions with the COP9 signalosome (CSN) appear to be important for their activity. Interacts with TIFY10A and inositol pentakisphosphate to form a high-affinity jasmonates coreceptor. Involved in the regulation of plant gene expression during plant-pathogen interactions with Pseudomonas syringae and Alternaria brassicicola.</text>
</comment>
<comment type="pathway">
    <text>Protein modification; protein ubiquitination.</text>
</comment>
<comment type="subunit">
    <text evidence="3 6 7 9 11">Component of SCF(COI1) E3 ubiquitin ligase complexes at least composed of ASK1 or ASK2, CUL1, RBX1A or RBX1B and COI1. Interacts with ASK1 and ASK2, but separately. Also binds to ASK11 and ASK12. Interacts with RBCS-1B and HDA6. SCF complexes interact with the COP9 signalosome (CSN). Interacts with TIFY10A.</text>
</comment>
<comment type="interaction">
    <interactant intactId="EBI-401159">
        <id>O04197</id>
    </interactant>
    <interactant intactId="EBI-532411">
        <id>Q94AH6</id>
        <label>CUL1</label>
    </interactant>
    <organismsDiffer>false</organismsDiffer>
    <experiments>3</experiments>
</comment>
<comment type="interaction">
    <interactant intactId="EBI-401159">
        <id>O04197</id>
    </interactant>
    <interactant intactId="EBI-639608">
        <id>Q9FML2</id>
        <label>HDA6</label>
    </interactant>
    <organismsDiffer>false</organismsDiffer>
    <experiments>3</experiments>
</comment>
<comment type="interaction">
    <interactant intactId="EBI-401159">
        <id>O04197</id>
    </interactant>
    <interactant intactId="EBI-532357">
        <id>Q39255</id>
        <label>SKP1A</label>
    </interactant>
    <organismsDiffer>false</organismsDiffer>
    <experiments>11</experiments>
</comment>
<comment type="interaction">
    <interactant intactId="EBI-401159">
        <id>O04197</id>
    </interactant>
    <interactant intactId="EBI-604076">
        <id>Q9FHW7</id>
        <label>SKP1B</label>
    </interactant>
    <organismsDiffer>false</organismsDiffer>
    <experiments>6</experiments>
</comment>
<comment type="interaction">
    <interactant intactId="EBI-401159">
        <id>O04197</id>
    </interactant>
    <interactant intactId="EBI-1388539">
        <id>Q9LMA8</id>
        <label>TIFY10A</label>
    </interactant>
    <organismsDiffer>false</organismsDiffer>
    <experiments>10</experiments>
</comment>
<comment type="interaction">
    <interactant intactId="EBI-401159">
        <id>O04197</id>
    </interactant>
    <interactant intactId="EBI-1792431">
        <id>Q9LVI4</id>
        <label>TIFY6B</label>
    </interactant>
    <organismsDiffer>false</organismsDiffer>
    <experiments>6</experiments>
</comment>
<comment type="interaction">
    <interactant intactId="EBI-401159">
        <id>O04197</id>
    </interactant>
    <interactant intactId="EBI-1792583">
        <id>Q8W4J8</id>
        <label>TIFY7</label>
    </interactant>
    <organismsDiffer>false</organismsDiffer>
    <experiments>7</experiments>
</comment>
<comment type="domain">
    <text evidence="2">The F-box domain is essential for the formation of SFC(COI1) complexes.</text>
</comment>
<comment type="domain">
    <text evidence="2">The Leu-rich domain is involved in the interactions with RBCS-1B and RPD3B.</text>
</comment>
<comment type="disruption phenotype">
    <text evidence="12">Mutants coi1-1 to coi1-14 are male sterile, insensitive to MeJA and coronatine, and exhibit enhanced resistance to Pseudomonas syringae atropurpurea (coronatine producing strain). Mutant coi1-16 has reduced sensitivity to jasmonate, but is male fertile when grown below 22 degrees Celsius and male sterile otherwise.</text>
</comment>
<reference key="1">
    <citation type="journal article" date="1998" name="Science">
        <title>COI1: an Arabidopsis gene required for jasmonate-regulated defense and fertility.</title>
        <authorList>
            <person name="Xie D."/>
            <person name="Feys B.F."/>
            <person name="James S."/>
            <person name="Nieto-Rostro M."/>
            <person name="Turner J.G."/>
        </authorList>
    </citation>
    <scope>NUCLEOTIDE SEQUENCE [MRNA]</scope>
    <scope>FUNCTION</scope>
    <scope>DISRUPTION PHENOTYPE</scope>
    <source>
        <strain>cv. Columbia</strain>
    </source>
</reference>
<reference key="2">
    <citation type="submission" date="2007-03" db="EMBL/GenBank/DDBJ databases">
        <title>Genes encoding defense signaling proteins in plants show weaker signatures of selection than those encoding recognition proteins.</title>
        <authorList>
            <person name="Caldwell K.S."/>
            <person name="Michelmore R.W."/>
        </authorList>
    </citation>
    <scope>NUCLEOTIDE SEQUENCE [GENOMIC DNA]</scope>
    <source>
        <strain>cv. Aa-0</strain>
        <strain>cv. Ak-1</strain>
        <strain>cv. Bay-0</strain>
        <strain>cv. C24</strain>
        <strain>cv. Columbia</strain>
        <strain>cv. Cvi-0</strain>
        <strain>cv. Di-0</strain>
        <strain>cv. Ei-2</strain>
        <strain>cv. Gu-0</strain>
        <strain>cv. HOG</strain>
        <strain>cv. Landsberg erecta</strain>
        <strain>cv. Lz-0</strain>
        <strain>cv. Nd-1</strain>
        <strain>cv. Sha</strain>
        <strain>cv. Sorbo</strain>
        <strain>cv. Tsu-0</strain>
        <strain>cv. Wassilewskija</strain>
        <strain>cv. Wei-0</strain>
    </source>
</reference>
<reference key="3">
    <citation type="journal article" date="1999" name="Nature">
        <title>Sequence and analysis of chromosome 2 of the plant Arabidopsis thaliana.</title>
        <authorList>
            <person name="Lin X."/>
            <person name="Kaul S."/>
            <person name="Rounsley S.D."/>
            <person name="Shea T.P."/>
            <person name="Benito M.-I."/>
            <person name="Town C.D."/>
            <person name="Fujii C.Y."/>
            <person name="Mason T.M."/>
            <person name="Bowman C.L."/>
            <person name="Barnstead M.E."/>
            <person name="Feldblyum T.V."/>
            <person name="Buell C.R."/>
            <person name="Ketchum K.A."/>
            <person name="Lee J.J."/>
            <person name="Ronning C.M."/>
            <person name="Koo H.L."/>
            <person name="Moffat K.S."/>
            <person name="Cronin L.A."/>
            <person name="Shen M."/>
            <person name="Pai G."/>
            <person name="Van Aken S."/>
            <person name="Umayam L."/>
            <person name="Tallon L.J."/>
            <person name="Gill J.E."/>
            <person name="Adams M.D."/>
            <person name="Carrera A.J."/>
            <person name="Creasy T.H."/>
            <person name="Goodman H.M."/>
            <person name="Somerville C.R."/>
            <person name="Copenhaver G.P."/>
            <person name="Preuss D."/>
            <person name="Nierman W.C."/>
            <person name="White O."/>
            <person name="Eisen J.A."/>
            <person name="Salzberg S.L."/>
            <person name="Fraser C.M."/>
            <person name="Venter J.C."/>
        </authorList>
    </citation>
    <scope>NUCLEOTIDE SEQUENCE [LARGE SCALE GENOMIC DNA]</scope>
    <source>
        <strain>cv. Columbia</strain>
    </source>
</reference>
<reference key="4">
    <citation type="journal article" date="2017" name="Plant J.">
        <title>Araport11: a complete reannotation of the Arabidopsis thaliana reference genome.</title>
        <authorList>
            <person name="Cheng C.Y."/>
            <person name="Krishnakumar V."/>
            <person name="Chan A.P."/>
            <person name="Thibaud-Nissen F."/>
            <person name="Schobel S."/>
            <person name="Town C.D."/>
        </authorList>
    </citation>
    <scope>GENOME REANNOTATION</scope>
    <source>
        <strain>cv. Columbia</strain>
    </source>
</reference>
<reference key="5">
    <citation type="journal article" date="2003" name="Science">
        <title>Empirical analysis of transcriptional activity in the Arabidopsis genome.</title>
        <authorList>
            <person name="Yamada K."/>
            <person name="Lim J."/>
            <person name="Dale J.M."/>
            <person name="Chen H."/>
            <person name="Shinn P."/>
            <person name="Palm C.J."/>
            <person name="Southwick A.M."/>
            <person name="Wu H.C."/>
            <person name="Kim C.J."/>
            <person name="Nguyen M."/>
            <person name="Pham P.K."/>
            <person name="Cheuk R.F."/>
            <person name="Karlin-Newmann G."/>
            <person name="Liu S.X."/>
            <person name="Lam B."/>
            <person name="Sakano H."/>
            <person name="Wu T."/>
            <person name="Yu G."/>
            <person name="Miranda M."/>
            <person name="Quach H.L."/>
            <person name="Tripp M."/>
            <person name="Chang C.H."/>
            <person name="Lee J.M."/>
            <person name="Toriumi M.J."/>
            <person name="Chan M.M."/>
            <person name="Tang C.C."/>
            <person name="Onodera C.S."/>
            <person name="Deng J.M."/>
            <person name="Akiyama K."/>
            <person name="Ansari Y."/>
            <person name="Arakawa T."/>
            <person name="Banh J."/>
            <person name="Banno F."/>
            <person name="Bowser L."/>
            <person name="Brooks S.Y."/>
            <person name="Carninci P."/>
            <person name="Chao Q."/>
            <person name="Choy N."/>
            <person name="Enju A."/>
            <person name="Goldsmith A.D."/>
            <person name="Gurjal M."/>
            <person name="Hansen N.F."/>
            <person name="Hayashizaki Y."/>
            <person name="Johnson-Hopson C."/>
            <person name="Hsuan V.W."/>
            <person name="Iida K."/>
            <person name="Karnes M."/>
            <person name="Khan S."/>
            <person name="Koesema E."/>
            <person name="Ishida J."/>
            <person name="Jiang P.X."/>
            <person name="Jones T."/>
            <person name="Kawai J."/>
            <person name="Kamiya A."/>
            <person name="Meyers C."/>
            <person name="Nakajima M."/>
            <person name="Narusaka M."/>
            <person name="Seki M."/>
            <person name="Sakurai T."/>
            <person name="Satou M."/>
            <person name="Tamse R."/>
            <person name="Vaysberg M."/>
            <person name="Wallender E.K."/>
            <person name="Wong C."/>
            <person name="Yamamura Y."/>
            <person name="Yuan S."/>
            <person name="Shinozaki K."/>
            <person name="Davis R.W."/>
            <person name="Theologis A."/>
            <person name="Ecker J.R."/>
        </authorList>
    </citation>
    <scope>NUCLEOTIDE SEQUENCE [LARGE SCALE MRNA]</scope>
    <source>
        <strain>cv. Columbia</strain>
    </source>
</reference>
<reference key="6">
    <citation type="journal article" date="1994" name="Plant Cell">
        <title>Arabidopsis mutants selected for resistance to the phytotoxin coronatine are male sterile, insensitive to methyl jasmonate, and resistant to a bacterial pathogen.</title>
        <authorList>
            <person name="Feys B.J.F."/>
            <person name="Benedetti C.S."/>
            <person name="Penfold C.N."/>
            <person name="Turner J.G."/>
        </authorList>
    </citation>
    <scope>FUNCTION</scope>
    <source>
        <strain>cv. Columbia</strain>
    </source>
</reference>
<reference key="7">
    <citation type="journal article" date="2000" name="Plant Cell">
        <title>Differential gene expression in response to mechanical wounding and insect feeding in Arabidopsis.</title>
        <authorList>
            <person name="Reymond P."/>
            <person name="Weber H."/>
            <person name="Damond M."/>
            <person name="Farmer E.E."/>
        </authorList>
    </citation>
    <scope>FUNCTION</scope>
</reference>
<reference key="8">
    <citation type="journal article" date="2000" name="Trends Plant Sci.">
        <title>F-box proteins in Arabidopsis.</title>
        <authorList>
            <person name="Xiao W."/>
            <person name="Jang J.-C."/>
        </authorList>
    </citation>
    <scope>GENE FAMILY</scope>
    <scope>NOMENCLATURE</scope>
</reference>
<reference key="9">
    <citation type="journal article" date="2002" name="Planta">
        <title>A conditionally fertile coi1 allele indicates cross-talk between plant hormone signalling pathways in Arabidopsis thaliana seeds and young seedlings.</title>
        <authorList>
            <person name="Ellis C."/>
            <person name="Turner J.G."/>
        </authorList>
    </citation>
    <scope>FUNCTION</scope>
    <scope>MUTAGENESIS OF LEU-245</scope>
</reference>
<reference key="10">
    <citation type="journal article" date="2002" name="Plant Cell">
        <title>The SCF(COI1) ubiquitin-ligase complexes are required for jasmonate response in Arabidopsis.</title>
        <authorList>
            <person name="Xu L."/>
            <person name="Liu F."/>
            <person name="Lechner E."/>
            <person name="Genschik P."/>
            <person name="Crosby W.L."/>
            <person name="Ma H."/>
            <person name="Peng W."/>
            <person name="Huang D."/>
            <person name="Xie D."/>
        </authorList>
    </citation>
    <scope>FUNCTION</scope>
    <scope>SUBUNIT</scope>
    <scope>MUTAGENESIS OF GLU-22</scope>
</reference>
<reference key="11">
    <citation type="journal article" date="2002" name="Plant J.">
        <title>COI1 links jasmonate signalling and fertility to the SCF ubiquitin-ligase complex in Arabidopsis.</title>
        <authorList>
            <person name="Devoto A."/>
            <person name="Nieto-Rostro M."/>
            <person name="Xie D."/>
            <person name="Ellis C."/>
            <person name="Harmston R."/>
            <person name="Patrick E."/>
            <person name="Davis J."/>
            <person name="Sherratt L."/>
            <person name="Coleman M."/>
            <person name="Turner J.G."/>
        </authorList>
    </citation>
    <scope>FUNCTION</scope>
    <scope>SUBUNIT</scope>
    <scope>MUTAGENESIS OF LEU-11; TRP-44 AND LEU-245</scope>
</reference>
<reference key="12">
    <citation type="journal article" date="2002" name="Plant Mol. Biol.">
        <title>Cloning by pathway activation in yeast: identification of an Arabidopsis thaliana F-box protein that can turn on glucose repression.</title>
        <authorList>
            <person name="Thelander M."/>
            <person name="Fredriksson D."/>
            <person name="Schouten J."/>
            <person name="Hoge J.H.C."/>
            <person name="Ronne H."/>
        </authorList>
    </citation>
    <scope>DOMAIN LEUCINE-RICH REPEATS</scope>
</reference>
<reference key="13">
    <citation type="journal article" date="2003" name="Plant Cell">
        <title>The COP9 signalosome interacts physically with SCF COI1 and modulates jasmonate responses.</title>
        <authorList>
            <person name="Feng S."/>
            <person name="Ma L."/>
            <person name="Wang X."/>
            <person name="Xie D."/>
            <person name="Dinesh-Kumar S.P."/>
            <person name="Wei N."/>
            <person name="Deng X.W."/>
        </authorList>
    </citation>
    <scope>FUNCTION</scope>
    <scope>SUBUNIT</scope>
</reference>
<reference key="14">
    <citation type="journal article" date="2003" name="Plant Physiol.">
        <title>Characterization of the early response of Arabidopsis to Alternaria brassicicola infection using expression profiling.</title>
        <authorList>
            <person name="van Wees S.C.M."/>
            <person name="Chang H.-S."/>
            <person name="Zhu T."/>
            <person name="Glazebrook J."/>
        </authorList>
    </citation>
    <scope>FUNCTION</scope>
</reference>
<reference key="15">
    <citation type="journal article" date="2004" name="Plant Cell Physiol.">
        <title>Expression and interaction analysis of Arabidopsis Skp1-related genes.</title>
        <authorList>
            <person name="Takahashi N."/>
            <person name="Kuroda H."/>
            <person name="Kuromori T."/>
            <person name="Hirayama T."/>
            <person name="Seki M."/>
            <person name="Shinozaki K."/>
            <person name="Shimada H."/>
            <person name="Matsui M."/>
        </authorList>
    </citation>
    <scope>INTERACTION WITH SKP1A/ASK1; SKP1B/ASK2; ASK11 AND ASK12</scope>
</reference>
<reference key="16">
    <citation type="journal article" date="2004" name="Plant J.">
        <title>Activation of a COI1-dependent pathway in Arabidopsis by Pseudomonas syringae type III effectors and coronatine.</title>
        <authorList>
            <person name="He P."/>
            <person name="Chintamanani S."/>
            <person name="Chen Z."/>
            <person name="Zhu L."/>
            <person name="Kunkel B.N."/>
            <person name="Alfano J.R."/>
            <person name="Tang X."/>
            <person name="Zhou J.-M."/>
        </authorList>
    </citation>
    <scope>FUNCTION</scope>
</reference>
<reference key="17">
    <citation type="journal article" date="2007" name="Mol. Cell. Proteomics">
        <title>Multidimensional protein identification technology (MudPIT) analysis of ubiquitinated proteins in plants.</title>
        <authorList>
            <person name="Maor R."/>
            <person name="Jones A."/>
            <person name="Nuehse T.S."/>
            <person name="Studholme D.J."/>
            <person name="Peck S.C."/>
            <person name="Shirasu K."/>
        </authorList>
    </citation>
    <scope>IDENTIFICATION BY MASS SPECTROMETRY [LARGE SCALE ANALYSIS]</scope>
    <source>
        <strain>cv. Landsberg erecta</strain>
    </source>
</reference>
<reference key="18">
    <citation type="journal article" date="2010" name="Nature">
        <title>Jasmonate perception by inositol-phosphate-potentiated COI1-JAZ co-receptor.</title>
        <authorList>
            <person name="Sheard L.B."/>
            <person name="Tan X."/>
            <person name="Mao H."/>
            <person name="Withers J."/>
            <person name="Ben-Nissan G."/>
            <person name="Hinds T.R."/>
            <person name="Kobayashi Y."/>
            <person name="Hsu F.F."/>
            <person name="Sharon M."/>
            <person name="Browse J."/>
            <person name="He S.Y."/>
            <person name="Rizo J."/>
            <person name="Howe G.A."/>
            <person name="Zheng N."/>
        </authorList>
    </citation>
    <scope>X-RAY CRYSTALLOGRAPHY (2.80 ANGSTROMS)1-592 IN COMPLEX WITH JASMONOYL-ISOLEUCINE AND CORONATINE</scope>
    <scope>INTERACTION WITH SKP1A AND TIFY10A</scope>
    <scope>MUTAGENESIS OF ARG-85; MET-88; PHE-89; ARG-121; LEU-301; TYR-302; ARG-326; ARG-348; ARG-351; TYR-386; ARG-409; TYR-444; LEU-469 AND ARG-496</scope>
</reference>